<organism>
    <name type="scientific">Escherichia coli O9:H4 (strain HS)</name>
    <dbReference type="NCBI Taxonomy" id="331112"/>
    <lineage>
        <taxon>Bacteria</taxon>
        <taxon>Pseudomonadati</taxon>
        <taxon>Pseudomonadota</taxon>
        <taxon>Gammaproteobacteria</taxon>
        <taxon>Enterobacterales</taxon>
        <taxon>Enterobacteriaceae</taxon>
        <taxon>Escherichia</taxon>
    </lineage>
</organism>
<protein>
    <recommendedName>
        <fullName evidence="1">Aspartate carbamoyltransferase regulatory chain</fullName>
    </recommendedName>
</protein>
<gene>
    <name evidence="1" type="primary">pyrI</name>
    <name type="ordered locus">EcHS_A4500</name>
</gene>
<feature type="chain" id="PRO_1000057015" description="Aspartate carbamoyltransferase regulatory chain">
    <location>
        <begin position="1"/>
        <end position="153"/>
    </location>
</feature>
<feature type="binding site" evidence="1">
    <location>
        <position position="109"/>
    </location>
    <ligand>
        <name>Zn(2+)</name>
        <dbReference type="ChEBI" id="CHEBI:29105"/>
    </ligand>
</feature>
<feature type="binding site" evidence="1">
    <location>
        <position position="114"/>
    </location>
    <ligand>
        <name>Zn(2+)</name>
        <dbReference type="ChEBI" id="CHEBI:29105"/>
    </ligand>
</feature>
<feature type="binding site" evidence="1">
    <location>
        <position position="138"/>
    </location>
    <ligand>
        <name>Zn(2+)</name>
        <dbReference type="ChEBI" id="CHEBI:29105"/>
    </ligand>
</feature>
<feature type="binding site" evidence="1">
    <location>
        <position position="141"/>
    </location>
    <ligand>
        <name>Zn(2+)</name>
        <dbReference type="ChEBI" id="CHEBI:29105"/>
    </ligand>
</feature>
<reference key="1">
    <citation type="journal article" date="2008" name="J. Bacteriol.">
        <title>The pangenome structure of Escherichia coli: comparative genomic analysis of E. coli commensal and pathogenic isolates.</title>
        <authorList>
            <person name="Rasko D.A."/>
            <person name="Rosovitz M.J."/>
            <person name="Myers G.S.A."/>
            <person name="Mongodin E.F."/>
            <person name="Fricke W.F."/>
            <person name="Gajer P."/>
            <person name="Crabtree J."/>
            <person name="Sebaihia M."/>
            <person name="Thomson N.R."/>
            <person name="Chaudhuri R."/>
            <person name="Henderson I.R."/>
            <person name="Sperandio V."/>
            <person name="Ravel J."/>
        </authorList>
    </citation>
    <scope>NUCLEOTIDE SEQUENCE [LARGE SCALE GENOMIC DNA]</scope>
    <source>
        <strain>HS</strain>
    </source>
</reference>
<dbReference type="EMBL" id="CP000802">
    <property type="protein sequence ID" value="ABV08656.1"/>
    <property type="molecule type" value="Genomic_DNA"/>
</dbReference>
<dbReference type="RefSeq" id="WP_000148581.1">
    <property type="nucleotide sequence ID" value="NC_009800.1"/>
</dbReference>
<dbReference type="SMR" id="A8A802"/>
<dbReference type="GeneID" id="93777580"/>
<dbReference type="KEGG" id="ecx:EcHS_A4500"/>
<dbReference type="HOGENOM" id="CLU_128576_0_0_6"/>
<dbReference type="GO" id="GO:0009347">
    <property type="term" value="C:aspartate carbamoyltransferase complex"/>
    <property type="evidence" value="ECO:0007669"/>
    <property type="project" value="InterPro"/>
</dbReference>
<dbReference type="GO" id="GO:0046872">
    <property type="term" value="F:metal ion binding"/>
    <property type="evidence" value="ECO:0007669"/>
    <property type="project" value="UniProtKB-KW"/>
</dbReference>
<dbReference type="GO" id="GO:0006207">
    <property type="term" value="P:'de novo' pyrimidine nucleobase biosynthetic process"/>
    <property type="evidence" value="ECO:0007669"/>
    <property type="project" value="InterPro"/>
</dbReference>
<dbReference type="GO" id="GO:0006221">
    <property type="term" value="P:pyrimidine nucleotide biosynthetic process"/>
    <property type="evidence" value="ECO:0007669"/>
    <property type="project" value="UniProtKB-UniRule"/>
</dbReference>
<dbReference type="FunFam" id="2.30.30.20:FF:000001">
    <property type="entry name" value="Aspartate carbamoyltransferase regulatory chain"/>
    <property type="match status" value="1"/>
</dbReference>
<dbReference type="FunFam" id="3.30.70.140:FF:000001">
    <property type="entry name" value="Aspartate carbamoyltransferase regulatory chain"/>
    <property type="match status" value="1"/>
</dbReference>
<dbReference type="Gene3D" id="2.30.30.20">
    <property type="entry name" value="Aspartate carbamoyltransferase regulatory subunit, C-terminal domain"/>
    <property type="match status" value="1"/>
</dbReference>
<dbReference type="Gene3D" id="3.30.70.140">
    <property type="entry name" value="Aspartate carbamoyltransferase regulatory subunit, N-terminal domain"/>
    <property type="match status" value="1"/>
</dbReference>
<dbReference type="HAMAP" id="MF_00002">
    <property type="entry name" value="Asp_carb_tr_reg"/>
    <property type="match status" value="1"/>
</dbReference>
<dbReference type="InterPro" id="IPR020545">
    <property type="entry name" value="Asp_carbamoyltransf_reg_N"/>
</dbReference>
<dbReference type="InterPro" id="IPR002801">
    <property type="entry name" value="Asp_carbamoylTrfase_reg"/>
</dbReference>
<dbReference type="InterPro" id="IPR020542">
    <property type="entry name" value="Asp_carbamoyltrfase_reg_C"/>
</dbReference>
<dbReference type="InterPro" id="IPR036792">
    <property type="entry name" value="Asp_carbatrfase_reg_C_sf"/>
</dbReference>
<dbReference type="InterPro" id="IPR036793">
    <property type="entry name" value="Asp_carbatrfase_reg_N_sf"/>
</dbReference>
<dbReference type="NCBIfam" id="TIGR00240">
    <property type="entry name" value="ATCase_reg"/>
    <property type="match status" value="1"/>
</dbReference>
<dbReference type="PANTHER" id="PTHR35805">
    <property type="entry name" value="ASPARTATE CARBAMOYLTRANSFERASE REGULATORY CHAIN"/>
    <property type="match status" value="1"/>
</dbReference>
<dbReference type="PANTHER" id="PTHR35805:SF1">
    <property type="entry name" value="ASPARTATE CARBAMOYLTRANSFERASE REGULATORY CHAIN"/>
    <property type="match status" value="1"/>
</dbReference>
<dbReference type="Pfam" id="PF01948">
    <property type="entry name" value="PyrI"/>
    <property type="match status" value="1"/>
</dbReference>
<dbReference type="Pfam" id="PF02748">
    <property type="entry name" value="PyrI_C"/>
    <property type="match status" value="1"/>
</dbReference>
<dbReference type="SUPFAM" id="SSF57825">
    <property type="entry name" value="Aspartate carbamoyltransferase, Regulatory-chain, C-terminal domain"/>
    <property type="match status" value="1"/>
</dbReference>
<dbReference type="SUPFAM" id="SSF54893">
    <property type="entry name" value="Aspartate carbamoyltransferase, Regulatory-chain, N-terminal domain"/>
    <property type="match status" value="1"/>
</dbReference>
<keyword id="KW-0479">Metal-binding</keyword>
<keyword id="KW-0665">Pyrimidine biosynthesis</keyword>
<keyword id="KW-0862">Zinc</keyword>
<evidence type="ECO:0000255" key="1">
    <source>
        <dbReference type="HAMAP-Rule" id="MF_00002"/>
    </source>
</evidence>
<comment type="function">
    <text evidence="1">Involved in allosteric regulation of aspartate carbamoyltransferase.</text>
</comment>
<comment type="cofactor">
    <cofactor evidence="1">
        <name>Zn(2+)</name>
        <dbReference type="ChEBI" id="CHEBI:29105"/>
    </cofactor>
    <text evidence="1">Binds 1 zinc ion per subunit.</text>
</comment>
<comment type="subunit">
    <text evidence="1">Contains catalytic and regulatory chains.</text>
</comment>
<comment type="similarity">
    <text evidence="1">Belongs to the PyrI family.</text>
</comment>
<sequence>MTHDNKLQVEAIKRGTVIDHIPAQIGFKLLSLFKLTETDQRITIGLNLPSGEMGRKDLIKIENTFLSEDQVDQLALYAPQATVNRIDNYEVVGKSRPSLPERIDNVLVCPNSNCISHAEPVSSSFAVRKRANDIALKCKYCEKEFSHNVVLAN</sequence>
<name>PYRI_ECOHS</name>
<accession>A8A802</accession>
<proteinExistence type="inferred from homology"/>